<gene>
    <name type="ordered locus">MT2759</name>
</gene>
<feature type="chain" id="PRO_0000426970" description="Uncharacterized transporter MT2759">
    <location>
        <begin position="1"/>
        <end position="428"/>
    </location>
</feature>
<feature type="transmembrane region" description="Helical" evidence="1">
    <location>
        <begin position="26"/>
        <end position="46"/>
    </location>
</feature>
<feature type="transmembrane region" description="Helical" evidence="1">
    <location>
        <begin position="51"/>
        <end position="71"/>
    </location>
</feature>
<feature type="transmembrane region" description="Helical" evidence="1">
    <location>
        <begin position="90"/>
        <end position="110"/>
    </location>
</feature>
<feature type="transmembrane region" description="Helical" evidence="1">
    <location>
        <begin position="135"/>
        <end position="155"/>
    </location>
</feature>
<feature type="transmembrane region" description="Helical" evidence="1">
    <location>
        <begin position="177"/>
        <end position="197"/>
    </location>
</feature>
<feature type="transmembrane region" description="Helical" evidence="1">
    <location>
        <begin position="223"/>
        <end position="243"/>
    </location>
</feature>
<feature type="transmembrane region" description="Helical" evidence="1">
    <location>
        <begin position="278"/>
        <end position="298"/>
    </location>
</feature>
<feature type="transmembrane region" description="Helical" evidence="1">
    <location>
        <begin position="314"/>
        <end position="334"/>
    </location>
</feature>
<feature type="transmembrane region" description="Helical" evidence="1">
    <location>
        <begin position="359"/>
        <end position="379"/>
    </location>
</feature>
<feature type="transmembrane region" description="Helical" evidence="1">
    <location>
        <begin position="407"/>
        <end position="427"/>
    </location>
</feature>
<proteinExistence type="inferred from homology"/>
<keyword id="KW-1003">Cell membrane</keyword>
<keyword id="KW-0472">Membrane</keyword>
<keyword id="KW-1185">Reference proteome</keyword>
<keyword id="KW-0812">Transmembrane</keyword>
<keyword id="KW-1133">Transmembrane helix</keyword>
<keyword id="KW-0813">Transport</keyword>
<organism>
    <name type="scientific">Mycobacterium tuberculosis (strain CDC 1551 / Oshkosh)</name>
    <dbReference type="NCBI Taxonomy" id="83331"/>
    <lineage>
        <taxon>Bacteria</taxon>
        <taxon>Bacillati</taxon>
        <taxon>Actinomycetota</taxon>
        <taxon>Actinomycetes</taxon>
        <taxon>Mycobacteriales</taxon>
        <taxon>Mycobacteriaceae</taxon>
        <taxon>Mycobacterium</taxon>
        <taxon>Mycobacterium tuberculosis complex</taxon>
    </lineage>
</organism>
<comment type="subcellular location">
    <subcellularLocation>
        <location evidence="2">Cell membrane</location>
        <topology evidence="2">Multi-pass membrane protein</topology>
    </subcellularLocation>
</comment>
<comment type="similarity">
    <text evidence="2">Belongs to the CitM (TC 2.A.11) transporter family.</text>
</comment>
<sequence>MSIIAITVFVAGYALIASDRVSKTRVALTCAAIMVGAGIVGSDDVFYSHEAGIDWDVIFLLLGMMIIVSVLRHTGVFEYVAIWAVKRANAAPLRIMILLVLVTALGSALLDNVTTVLLIAPVTLLVCDRLGVNSTPFLVAEVFASNVGGAATLVGDPPNIIIASRAGLTFNDFLIHMAPAVLVVMIALIGLLPWLLGSVTAEPDRVADVLSLNEREAIHDRGLLIKCGVVLVLVFAAFIAHPVLHIQPSLVALLGAGVLVRFSGLERSDYLSSVEWDTLLFFAGLFVMVGALVKTGVVEQLARAATELTGGNELLTVGLILGISAPVSGIIDNIPYVATMTPIVTELVAAMPGHVHPDTFWWALALSADFGGNLTAVAASANVVMLGIARRSGTPISFWKFTRKGAVVTAVSLVLSAVYLWLRYFVFG</sequence>
<dbReference type="EMBL" id="AE000516">
    <property type="protein sequence ID" value="AAK47074.1"/>
    <property type="molecule type" value="Genomic_DNA"/>
</dbReference>
<dbReference type="PIR" id="H70528">
    <property type="entry name" value="H70528"/>
</dbReference>
<dbReference type="RefSeq" id="WP_003899431.1">
    <property type="nucleotide sequence ID" value="NZ_KK341227.1"/>
</dbReference>
<dbReference type="SMR" id="P9WPD6"/>
<dbReference type="KEGG" id="mtc:MT2759"/>
<dbReference type="PATRIC" id="fig|83331.31.peg.2971"/>
<dbReference type="HOGENOM" id="CLU_011920_4_0_11"/>
<dbReference type="Proteomes" id="UP000001020">
    <property type="component" value="Chromosome"/>
</dbReference>
<dbReference type="GO" id="GO:0005886">
    <property type="term" value="C:plasma membrane"/>
    <property type="evidence" value="ECO:0007669"/>
    <property type="project" value="UniProtKB-SubCell"/>
</dbReference>
<dbReference type="GO" id="GO:0015105">
    <property type="term" value="F:arsenite transmembrane transporter activity"/>
    <property type="evidence" value="ECO:0007669"/>
    <property type="project" value="InterPro"/>
</dbReference>
<dbReference type="CDD" id="cd01116">
    <property type="entry name" value="P_permease"/>
    <property type="match status" value="1"/>
</dbReference>
<dbReference type="InterPro" id="IPR000802">
    <property type="entry name" value="Arsenical_pump_ArsB"/>
</dbReference>
<dbReference type="InterPro" id="IPR004680">
    <property type="entry name" value="Cit_transptr-like_dom"/>
</dbReference>
<dbReference type="InterPro" id="IPR051475">
    <property type="entry name" value="Diverse_Ion_Transporter"/>
</dbReference>
<dbReference type="PANTHER" id="PTHR43568">
    <property type="entry name" value="P PROTEIN"/>
    <property type="match status" value="1"/>
</dbReference>
<dbReference type="PANTHER" id="PTHR43568:SF1">
    <property type="entry name" value="P PROTEIN"/>
    <property type="match status" value="1"/>
</dbReference>
<dbReference type="Pfam" id="PF03600">
    <property type="entry name" value="CitMHS"/>
    <property type="match status" value="1"/>
</dbReference>
<dbReference type="PRINTS" id="PR00758">
    <property type="entry name" value="ARSENICPUMP"/>
</dbReference>
<name>Y2685_MYCTO</name>
<accession>P9WPD6</accession>
<accession>L0TD23</accession>
<accession>O07187</accession>
<reference key="1">
    <citation type="journal article" date="2002" name="J. Bacteriol.">
        <title>Whole-genome comparison of Mycobacterium tuberculosis clinical and laboratory strains.</title>
        <authorList>
            <person name="Fleischmann R.D."/>
            <person name="Alland D."/>
            <person name="Eisen J.A."/>
            <person name="Carpenter L."/>
            <person name="White O."/>
            <person name="Peterson J.D."/>
            <person name="DeBoy R.T."/>
            <person name="Dodson R.J."/>
            <person name="Gwinn M.L."/>
            <person name="Haft D.H."/>
            <person name="Hickey E.K."/>
            <person name="Kolonay J.F."/>
            <person name="Nelson W.C."/>
            <person name="Umayam L.A."/>
            <person name="Ermolaeva M.D."/>
            <person name="Salzberg S.L."/>
            <person name="Delcher A."/>
            <person name="Utterback T.R."/>
            <person name="Weidman J.F."/>
            <person name="Khouri H.M."/>
            <person name="Gill J."/>
            <person name="Mikula A."/>
            <person name="Bishai W."/>
            <person name="Jacobs W.R. Jr."/>
            <person name="Venter J.C."/>
            <person name="Fraser C.M."/>
        </authorList>
    </citation>
    <scope>NUCLEOTIDE SEQUENCE [LARGE SCALE GENOMIC DNA]</scope>
    <source>
        <strain>CDC 1551 / Oshkosh</strain>
    </source>
</reference>
<protein>
    <recommendedName>
        <fullName>Uncharacterized transporter MT2759</fullName>
    </recommendedName>
</protein>
<evidence type="ECO:0000255" key="1"/>
<evidence type="ECO:0000305" key="2"/>